<accession>P51860</accession>
<accession>Q8K3R9</accession>
<protein>
    <recommendedName>
        <fullName>Nucleosome assembly protein 1-like 2</fullName>
    </recommendedName>
    <alternativeName>
        <fullName>Brain-specific protein, X-linked</fullName>
    </alternativeName>
</protein>
<name>NP1L2_MOUSE</name>
<organism>
    <name type="scientific">Mus musculus</name>
    <name type="common">Mouse</name>
    <dbReference type="NCBI Taxonomy" id="10090"/>
    <lineage>
        <taxon>Eukaryota</taxon>
        <taxon>Metazoa</taxon>
        <taxon>Chordata</taxon>
        <taxon>Craniata</taxon>
        <taxon>Vertebrata</taxon>
        <taxon>Euteleostomi</taxon>
        <taxon>Mammalia</taxon>
        <taxon>Eutheria</taxon>
        <taxon>Euarchontoglires</taxon>
        <taxon>Glires</taxon>
        <taxon>Rodentia</taxon>
        <taxon>Myomorpha</taxon>
        <taxon>Muroidea</taxon>
        <taxon>Muridae</taxon>
        <taxon>Murinae</taxon>
        <taxon>Mus</taxon>
        <taxon>Mus</taxon>
    </lineage>
</organism>
<proteinExistence type="evidence at protein level"/>
<feature type="chain" id="PRO_0000185656" description="Nucleosome assembly protein 1-like 2">
    <location>
        <begin position="1"/>
        <end position="460"/>
    </location>
</feature>
<feature type="region of interest" description="Disordered" evidence="2">
    <location>
        <begin position="1"/>
        <end position="87"/>
    </location>
</feature>
<feature type="region of interest" description="Disordered" evidence="2">
    <location>
        <begin position="213"/>
        <end position="238"/>
    </location>
</feature>
<feature type="short sequence motif" description="Nuclear localization signal" evidence="1">
    <location>
        <begin position="346"/>
        <end position="352"/>
    </location>
</feature>
<feature type="compositionally biased region" description="Basic and acidic residues" evidence="2">
    <location>
        <begin position="1"/>
        <end position="11"/>
    </location>
</feature>
<feature type="compositionally biased region" description="Acidic residues" evidence="2">
    <location>
        <begin position="213"/>
        <end position="223"/>
    </location>
</feature>
<feature type="sequence conflict" description="In Ref. 1; CAA63109." evidence="3" ref="1">
    <original>D</original>
    <variation>V</variation>
    <location>
        <position position="385"/>
    </location>
</feature>
<dbReference type="EMBL" id="X92352">
    <property type="protein sequence ID" value="CAA63109.1"/>
    <property type="molecule type" value="mRNA"/>
</dbReference>
<dbReference type="EMBL" id="AJ421480">
    <property type="protein sequence ID" value="CAD33966.1"/>
    <property type="molecule type" value="Genomic_DNA"/>
</dbReference>
<dbReference type="EMBL" id="AK051439">
    <property type="protein sequence ID" value="BAC34638.1"/>
    <property type="molecule type" value="mRNA"/>
</dbReference>
<dbReference type="EMBL" id="AK131621">
    <property type="protein sequence ID" value="BAE20726.1"/>
    <property type="molecule type" value="mRNA"/>
</dbReference>
<dbReference type="EMBL" id="AL773526">
    <property type="status" value="NOT_ANNOTATED_CDS"/>
    <property type="molecule type" value="Genomic_DNA"/>
</dbReference>
<dbReference type="EMBL" id="CH466564">
    <property type="protein sequence ID" value="EDL14110.1"/>
    <property type="molecule type" value="Genomic_DNA"/>
</dbReference>
<dbReference type="EMBL" id="BC115708">
    <property type="protein sequence ID" value="AAI15709.1"/>
    <property type="molecule type" value="mRNA"/>
</dbReference>
<dbReference type="EMBL" id="BC115761">
    <property type="protein sequence ID" value="AAI15762.1"/>
    <property type="molecule type" value="mRNA"/>
</dbReference>
<dbReference type="CCDS" id="CCDS53164.1"/>
<dbReference type="RefSeq" id="NP_032697.2">
    <property type="nucleotide sequence ID" value="NM_008671.3"/>
</dbReference>
<dbReference type="SMR" id="P51860"/>
<dbReference type="BioGRID" id="201691">
    <property type="interactions" value="10"/>
</dbReference>
<dbReference type="FunCoup" id="P51860">
    <property type="interactions" value="427"/>
</dbReference>
<dbReference type="IntAct" id="P51860">
    <property type="interactions" value="1"/>
</dbReference>
<dbReference type="STRING" id="10090.ENSMUSP00000112677"/>
<dbReference type="PhosphoSitePlus" id="P51860"/>
<dbReference type="PaxDb" id="10090-ENSMUSP00000112677"/>
<dbReference type="ProteomicsDB" id="293711"/>
<dbReference type="Antibodypedia" id="27991">
    <property type="antibodies" value="130 antibodies from 19 providers"/>
</dbReference>
<dbReference type="DNASU" id="17954"/>
<dbReference type="Ensembl" id="ENSMUST00000121720.2">
    <property type="protein sequence ID" value="ENSMUSP00000112677.2"/>
    <property type="gene ID" value="ENSMUSG00000082229.2"/>
</dbReference>
<dbReference type="GeneID" id="17954"/>
<dbReference type="KEGG" id="mmu:17954"/>
<dbReference type="UCSC" id="uc009tzi.2">
    <property type="organism name" value="mouse"/>
</dbReference>
<dbReference type="AGR" id="MGI:106654"/>
<dbReference type="CTD" id="4674"/>
<dbReference type="MGI" id="MGI:106654">
    <property type="gene designation" value="Nap1l2"/>
</dbReference>
<dbReference type="VEuPathDB" id="HostDB:ENSMUSG00000082229"/>
<dbReference type="eggNOG" id="KOG1507">
    <property type="taxonomic scope" value="Eukaryota"/>
</dbReference>
<dbReference type="GeneTree" id="ENSGT00940000163372"/>
<dbReference type="HOGENOM" id="CLU_038841_3_1_1"/>
<dbReference type="InParanoid" id="P51860"/>
<dbReference type="OMA" id="WMAAIEE"/>
<dbReference type="OrthoDB" id="27325at2759"/>
<dbReference type="PhylomeDB" id="P51860"/>
<dbReference type="TreeFam" id="TF314349"/>
<dbReference type="BioGRID-ORCS" id="17954">
    <property type="hits" value="2 hits in 80 CRISPR screens"/>
</dbReference>
<dbReference type="PRO" id="PR:P51860"/>
<dbReference type="Proteomes" id="UP000000589">
    <property type="component" value="Chromosome X"/>
</dbReference>
<dbReference type="RNAct" id="P51860">
    <property type="molecule type" value="protein"/>
</dbReference>
<dbReference type="Bgee" id="ENSMUSG00000082229">
    <property type="expression patterns" value="Expressed in pontine nuclear group and 156 other cell types or tissues"/>
</dbReference>
<dbReference type="GO" id="GO:0005634">
    <property type="term" value="C:nucleus"/>
    <property type="evidence" value="ECO:0007669"/>
    <property type="project" value="UniProtKB-SubCell"/>
</dbReference>
<dbReference type="GO" id="GO:0003682">
    <property type="term" value="F:chromatin binding"/>
    <property type="evidence" value="ECO:0000314"/>
    <property type="project" value="MGI"/>
</dbReference>
<dbReference type="GO" id="GO:0035034">
    <property type="term" value="F:histone acetyltransferase regulator activity"/>
    <property type="evidence" value="ECO:0000314"/>
    <property type="project" value="MGI"/>
</dbReference>
<dbReference type="GO" id="GO:0042393">
    <property type="term" value="F:histone binding"/>
    <property type="evidence" value="ECO:0000314"/>
    <property type="project" value="MGI"/>
</dbReference>
<dbReference type="GO" id="GO:0030182">
    <property type="term" value="P:neuron differentiation"/>
    <property type="evidence" value="ECO:0000315"/>
    <property type="project" value="MGI"/>
</dbReference>
<dbReference type="GO" id="GO:0006334">
    <property type="term" value="P:nucleosome assembly"/>
    <property type="evidence" value="ECO:0007669"/>
    <property type="project" value="InterPro"/>
</dbReference>
<dbReference type="GO" id="GO:0045666">
    <property type="term" value="P:positive regulation of neuron differentiation"/>
    <property type="evidence" value="ECO:0000315"/>
    <property type="project" value="MGI"/>
</dbReference>
<dbReference type="GO" id="GO:2000035">
    <property type="term" value="P:regulation of stem cell division"/>
    <property type="evidence" value="ECO:0000315"/>
    <property type="project" value="MGI"/>
</dbReference>
<dbReference type="FunFam" id="1.20.5.1500:FF:000001">
    <property type="entry name" value="Nucleosome assembly protein 1-like 1"/>
    <property type="match status" value="1"/>
</dbReference>
<dbReference type="FunFam" id="3.30.1120.90:FF:000001">
    <property type="entry name" value="Nucleosome assembly protein 1-like 1"/>
    <property type="match status" value="1"/>
</dbReference>
<dbReference type="Gene3D" id="1.20.5.1500">
    <property type="match status" value="1"/>
</dbReference>
<dbReference type="Gene3D" id="3.30.1120.90">
    <property type="entry name" value="Nucleosome assembly protein"/>
    <property type="match status" value="1"/>
</dbReference>
<dbReference type="InterPro" id="IPR037231">
    <property type="entry name" value="NAP-like_sf"/>
</dbReference>
<dbReference type="InterPro" id="IPR002164">
    <property type="entry name" value="NAP_family"/>
</dbReference>
<dbReference type="PANTHER" id="PTHR11875">
    <property type="entry name" value="TESTIS-SPECIFIC Y-ENCODED PROTEIN"/>
    <property type="match status" value="1"/>
</dbReference>
<dbReference type="Pfam" id="PF00956">
    <property type="entry name" value="NAP"/>
    <property type="match status" value="1"/>
</dbReference>
<dbReference type="SUPFAM" id="SSF143113">
    <property type="entry name" value="NAP-like"/>
    <property type="match status" value="1"/>
</dbReference>
<gene>
    <name type="primary">Nap1l2</name>
    <name type="synonym">Bpx</name>
</gene>
<sequence length="460" mass="52158">MAESVDHKELSESNQEELGSQVMAEGPGESQDRSEGVSIEPGDGGQHGEETVAAGVGEEGKGEEAAAGSGEDAGKCGGTDEDSDSDRPKGLIGYLLDTDFVESLPVKVKCRVLALKKLQTRAAHLESKFLREFHDIERKFAEMYQPLLEKRRQIINAVYEPTEEECEYKSDCEDYFEEEMDEEEETNGNEDGMVHEYVDEDDGYEDCYYDYDDEEEEEEEDDSAGATGGEEVNEEDPKGIPDFWLTVLKNVEALTPMIKKYDEPILKLLTDIKVKLSDPGEPLSFTLEFHFKPNEYFKNELLTKTYVLKSKLACYDPHPYRGTAIEYATGCDIDWNEGKNVTLRTIKKKQRHRVWGTVRTVTEDFPKDSFFNFFSPHGISLNGGDENDDFLLGHNLRTYIIPRSVLFFSGDALESQQEGVVREVNDEIYDKIIYDDWMAAIEEVKACCKNLEALVEDIDR</sequence>
<keyword id="KW-0539">Nucleus</keyword>
<keyword id="KW-1185">Reference proteome</keyword>
<evidence type="ECO:0000255" key="1"/>
<evidence type="ECO:0000256" key="2">
    <source>
        <dbReference type="SAM" id="MobiDB-lite"/>
    </source>
</evidence>
<evidence type="ECO:0000305" key="3"/>
<reference key="1">
    <citation type="journal article" date="1996" name="Hum. Mol. Genet.">
        <title>Cloning and characterization of a murine brain specific gene Bpx and its human homologue lying within the Xic candidate region.</title>
        <authorList>
            <person name="Rougeulle C."/>
            <person name="Avner P."/>
        </authorList>
    </citation>
    <scope>NUCLEOTIDE SEQUENCE [MRNA]</scope>
    <source>
        <strain>BALB/cJ</strain>
        <tissue>Brain</tissue>
    </source>
</reference>
<reference key="2">
    <citation type="journal article" date="2002" name="Genome Res.">
        <title>Comparative sequence analysis of the X-inactivation center region in mouse, human and bovine.</title>
        <authorList>
            <person name="Chureau C."/>
            <person name="Prissette M."/>
            <person name="Bourdet A."/>
            <person name="Barbe V."/>
            <person name="Cattolico L."/>
            <person name="Jones L."/>
            <person name="Eggen A."/>
            <person name="Avner P."/>
            <person name="Duret L."/>
        </authorList>
    </citation>
    <scope>NUCLEOTIDE SEQUENCE [GENOMIC DNA]</scope>
    <source>
        <strain>129/Sv</strain>
    </source>
</reference>
<reference key="3">
    <citation type="journal article" date="2005" name="Science">
        <title>The transcriptional landscape of the mammalian genome.</title>
        <authorList>
            <person name="Carninci P."/>
            <person name="Kasukawa T."/>
            <person name="Katayama S."/>
            <person name="Gough J."/>
            <person name="Frith M.C."/>
            <person name="Maeda N."/>
            <person name="Oyama R."/>
            <person name="Ravasi T."/>
            <person name="Lenhard B."/>
            <person name="Wells C."/>
            <person name="Kodzius R."/>
            <person name="Shimokawa K."/>
            <person name="Bajic V.B."/>
            <person name="Brenner S.E."/>
            <person name="Batalov S."/>
            <person name="Forrest A.R."/>
            <person name="Zavolan M."/>
            <person name="Davis M.J."/>
            <person name="Wilming L.G."/>
            <person name="Aidinis V."/>
            <person name="Allen J.E."/>
            <person name="Ambesi-Impiombato A."/>
            <person name="Apweiler R."/>
            <person name="Aturaliya R.N."/>
            <person name="Bailey T.L."/>
            <person name="Bansal M."/>
            <person name="Baxter L."/>
            <person name="Beisel K.W."/>
            <person name="Bersano T."/>
            <person name="Bono H."/>
            <person name="Chalk A.M."/>
            <person name="Chiu K.P."/>
            <person name="Choudhary V."/>
            <person name="Christoffels A."/>
            <person name="Clutterbuck D.R."/>
            <person name="Crowe M.L."/>
            <person name="Dalla E."/>
            <person name="Dalrymple B.P."/>
            <person name="de Bono B."/>
            <person name="Della Gatta G."/>
            <person name="di Bernardo D."/>
            <person name="Down T."/>
            <person name="Engstrom P."/>
            <person name="Fagiolini M."/>
            <person name="Faulkner G."/>
            <person name="Fletcher C.F."/>
            <person name="Fukushima T."/>
            <person name="Furuno M."/>
            <person name="Futaki S."/>
            <person name="Gariboldi M."/>
            <person name="Georgii-Hemming P."/>
            <person name="Gingeras T.R."/>
            <person name="Gojobori T."/>
            <person name="Green R.E."/>
            <person name="Gustincich S."/>
            <person name="Harbers M."/>
            <person name="Hayashi Y."/>
            <person name="Hensch T.K."/>
            <person name="Hirokawa N."/>
            <person name="Hill D."/>
            <person name="Huminiecki L."/>
            <person name="Iacono M."/>
            <person name="Ikeo K."/>
            <person name="Iwama A."/>
            <person name="Ishikawa T."/>
            <person name="Jakt M."/>
            <person name="Kanapin A."/>
            <person name="Katoh M."/>
            <person name="Kawasawa Y."/>
            <person name="Kelso J."/>
            <person name="Kitamura H."/>
            <person name="Kitano H."/>
            <person name="Kollias G."/>
            <person name="Krishnan S.P."/>
            <person name="Kruger A."/>
            <person name="Kummerfeld S.K."/>
            <person name="Kurochkin I.V."/>
            <person name="Lareau L.F."/>
            <person name="Lazarevic D."/>
            <person name="Lipovich L."/>
            <person name="Liu J."/>
            <person name="Liuni S."/>
            <person name="McWilliam S."/>
            <person name="Madan Babu M."/>
            <person name="Madera M."/>
            <person name="Marchionni L."/>
            <person name="Matsuda H."/>
            <person name="Matsuzawa S."/>
            <person name="Miki H."/>
            <person name="Mignone F."/>
            <person name="Miyake S."/>
            <person name="Morris K."/>
            <person name="Mottagui-Tabar S."/>
            <person name="Mulder N."/>
            <person name="Nakano N."/>
            <person name="Nakauchi H."/>
            <person name="Ng P."/>
            <person name="Nilsson R."/>
            <person name="Nishiguchi S."/>
            <person name="Nishikawa S."/>
            <person name="Nori F."/>
            <person name="Ohara O."/>
            <person name="Okazaki Y."/>
            <person name="Orlando V."/>
            <person name="Pang K.C."/>
            <person name="Pavan W.J."/>
            <person name="Pavesi G."/>
            <person name="Pesole G."/>
            <person name="Petrovsky N."/>
            <person name="Piazza S."/>
            <person name="Reed J."/>
            <person name="Reid J.F."/>
            <person name="Ring B.Z."/>
            <person name="Ringwald M."/>
            <person name="Rost B."/>
            <person name="Ruan Y."/>
            <person name="Salzberg S.L."/>
            <person name="Sandelin A."/>
            <person name="Schneider C."/>
            <person name="Schoenbach C."/>
            <person name="Sekiguchi K."/>
            <person name="Semple C.A."/>
            <person name="Seno S."/>
            <person name="Sessa L."/>
            <person name="Sheng Y."/>
            <person name="Shibata Y."/>
            <person name="Shimada H."/>
            <person name="Shimada K."/>
            <person name="Silva D."/>
            <person name="Sinclair B."/>
            <person name="Sperling S."/>
            <person name="Stupka E."/>
            <person name="Sugiura K."/>
            <person name="Sultana R."/>
            <person name="Takenaka Y."/>
            <person name="Taki K."/>
            <person name="Tammoja K."/>
            <person name="Tan S.L."/>
            <person name="Tang S."/>
            <person name="Taylor M.S."/>
            <person name="Tegner J."/>
            <person name="Teichmann S.A."/>
            <person name="Ueda H.R."/>
            <person name="van Nimwegen E."/>
            <person name="Verardo R."/>
            <person name="Wei C.L."/>
            <person name="Yagi K."/>
            <person name="Yamanishi H."/>
            <person name="Zabarovsky E."/>
            <person name="Zhu S."/>
            <person name="Zimmer A."/>
            <person name="Hide W."/>
            <person name="Bult C."/>
            <person name="Grimmond S.M."/>
            <person name="Teasdale R.D."/>
            <person name="Liu E.T."/>
            <person name="Brusic V."/>
            <person name="Quackenbush J."/>
            <person name="Wahlestedt C."/>
            <person name="Mattick J.S."/>
            <person name="Hume D.A."/>
            <person name="Kai C."/>
            <person name="Sasaki D."/>
            <person name="Tomaru Y."/>
            <person name="Fukuda S."/>
            <person name="Kanamori-Katayama M."/>
            <person name="Suzuki M."/>
            <person name="Aoki J."/>
            <person name="Arakawa T."/>
            <person name="Iida J."/>
            <person name="Imamura K."/>
            <person name="Itoh M."/>
            <person name="Kato T."/>
            <person name="Kawaji H."/>
            <person name="Kawagashira N."/>
            <person name="Kawashima T."/>
            <person name="Kojima M."/>
            <person name="Kondo S."/>
            <person name="Konno H."/>
            <person name="Nakano K."/>
            <person name="Ninomiya N."/>
            <person name="Nishio T."/>
            <person name="Okada M."/>
            <person name="Plessy C."/>
            <person name="Shibata K."/>
            <person name="Shiraki T."/>
            <person name="Suzuki S."/>
            <person name="Tagami M."/>
            <person name="Waki K."/>
            <person name="Watahiki A."/>
            <person name="Okamura-Oho Y."/>
            <person name="Suzuki H."/>
            <person name="Kawai J."/>
            <person name="Hayashizaki Y."/>
        </authorList>
    </citation>
    <scope>NUCLEOTIDE SEQUENCE [LARGE SCALE MRNA]</scope>
    <source>
        <strain>C57BL/6J</strain>
        <tissue>Cerebellum</tissue>
        <tissue>Spinal ganglion</tissue>
    </source>
</reference>
<reference key="4">
    <citation type="journal article" date="2009" name="PLoS Biol.">
        <title>Lineage-specific biology revealed by a finished genome assembly of the mouse.</title>
        <authorList>
            <person name="Church D.M."/>
            <person name="Goodstadt L."/>
            <person name="Hillier L.W."/>
            <person name="Zody M.C."/>
            <person name="Goldstein S."/>
            <person name="She X."/>
            <person name="Bult C.J."/>
            <person name="Agarwala R."/>
            <person name="Cherry J.L."/>
            <person name="DiCuccio M."/>
            <person name="Hlavina W."/>
            <person name="Kapustin Y."/>
            <person name="Meric P."/>
            <person name="Maglott D."/>
            <person name="Birtle Z."/>
            <person name="Marques A.C."/>
            <person name="Graves T."/>
            <person name="Zhou S."/>
            <person name="Teague B."/>
            <person name="Potamousis K."/>
            <person name="Churas C."/>
            <person name="Place M."/>
            <person name="Herschleb J."/>
            <person name="Runnheim R."/>
            <person name="Forrest D."/>
            <person name="Amos-Landgraf J."/>
            <person name="Schwartz D.C."/>
            <person name="Cheng Z."/>
            <person name="Lindblad-Toh K."/>
            <person name="Eichler E.E."/>
            <person name="Ponting C.P."/>
        </authorList>
    </citation>
    <scope>NUCLEOTIDE SEQUENCE [LARGE SCALE GENOMIC DNA]</scope>
    <source>
        <strain>C57BL/6J</strain>
    </source>
</reference>
<reference key="5">
    <citation type="submission" date="2005-09" db="EMBL/GenBank/DDBJ databases">
        <authorList>
            <person name="Mural R.J."/>
            <person name="Adams M.D."/>
            <person name="Myers E.W."/>
            <person name="Smith H.O."/>
            <person name="Venter J.C."/>
        </authorList>
    </citation>
    <scope>NUCLEOTIDE SEQUENCE [LARGE SCALE GENOMIC DNA]</scope>
</reference>
<reference key="6">
    <citation type="journal article" date="2004" name="Genome Res.">
        <title>The status, quality, and expansion of the NIH full-length cDNA project: the Mammalian Gene Collection (MGC).</title>
        <authorList>
            <consortium name="The MGC Project Team"/>
        </authorList>
    </citation>
    <scope>NUCLEOTIDE SEQUENCE [LARGE SCALE MRNA]</scope>
</reference>
<comment type="function">
    <text>Acidic protein which may be involved in interactions with other proteins or DNA.</text>
</comment>
<comment type="interaction">
    <interactant intactId="EBI-12516895">
        <id>P51860</id>
    </interactant>
    <interactant intactId="EBI-372530">
        <id>Q9UHL9</id>
        <label>GTF2IRD1</label>
    </interactant>
    <organismsDiffer>true</organismsDiffer>
    <experiments>3</experiments>
</comment>
<comment type="subcellular location">
    <subcellularLocation>
        <location evidence="3">Nucleus</location>
    </subcellularLocation>
</comment>
<comment type="tissue specificity">
    <text>Brain, specifically expressed in neurons.</text>
</comment>
<comment type="developmental stage">
    <text>First expressed around the day 7 embryo.</text>
</comment>
<comment type="similarity">
    <text evidence="3">Belongs to the nucleosome assembly protein (NAP) family.</text>
</comment>